<name>SHR2_STRPU</name>
<protein>
    <recommendedName>
        <fullName>Orphan steroid hormone receptor 2</fullName>
    </recommendedName>
    <alternativeName>
        <fullName>SpSHR2</fullName>
    </alternativeName>
</protein>
<evidence type="ECO:0000255" key="1"/>
<evidence type="ECO:0000255" key="2">
    <source>
        <dbReference type="PROSITE-ProRule" id="PRU00407"/>
    </source>
</evidence>
<evidence type="ECO:0000255" key="3">
    <source>
        <dbReference type="PROSITE-ProRule" id="PRU01189"/>
    </source>
</evidence>
<evidence type="ECO:0000269" key="4">
    <source>
    </source>
</evidence>
<evidence type="ECO:0000269" key="5">
    <source>
    </source>
</evidence>
<evidence type="ECO:0000269" key="6">
    <source>
    </source>
</evidence>
<evidence type="ECO:0000303" key="7">
    <source>
    </source>
</evidence>
<evidence type="ECO:0000305" key="8"/>
<evidence type="ECO:0000312" key="9">
    <source>
        <dbReference type="EMBL" id="AAB19174.1"/>
    </source>
</evidence>
<sequence length="583" mass="63853">MGMVSSQATPVEAYKVQQVQINDQTVEQLVRVQTSAGTTVTTIDAATAERLVKLREEDLIKFSAQGMSQAQMMAKPGMTSPRPIELCAVCGDKASGRHYGAISCEGCKGFFKRSIRKHLGYTCRGNKDCQIIKHNRNRCQYCRLQKCLDMGMKSDSVQCERSPLKTRDKTPGNCAASTDKIYIRKDIRSPLTATPTFVTGSVLAGGDMKSPQGNRQGLFDQGILLNVQTTPTSSPSASTSDSTTDLSTLASVVTSLANMNKKTEEGPSHSQQIYSPSQTLQIISNGDQDVQGGGDNVSKAFDALTKALNTSGDSEAGDLSIDQSANGGSSEVELVKLDSPMLSDHHMQFKLTTPSPMPQFLNVHYICESASRLLFLSMHWARSLPAFQVLSADTHTSMVQKCWSELFTLGLAQCAQAMALSTILTAIVNHLQTSLQQDKLSADRVKAVMEHIWKLQEFVTTTSKLDVDQTEFAYLKTIVLFSPDHPGLSNVRQIEKFQEMAISELHDYEAQTYPSKLNRFSKLLLRLPTLRLLSPAIMEELFFAGLIGNVQIDSIIPYILRMETADYNSAQITMSASPGSLIG</sequence>
<organism>
    <name type="scientific">Strongylocentrotus purpuratus</name>
    <name type="common">Purple sea urchin</name>
    <dbReference type="NCBI Taxonomy" id="7668"/>
    <lineage>
        <taxon>Eukaryota</taxon>
        <taxon>Metazoa</taxon>
        <taxon>Echinodermata</taxon>
        <taxon>Eleutherozoa</taxon>
        <taxon>Echinozoa</taxon>
        <taxon>Echinoidea</taxon>
        <taxon>Euechinoidea</taxon>
        <taxon>Echinacea</taxon>
        <taxon>Camarodonta</taxon>
        <taxon>Echinidea</taxon>
        <taxon>Strongylocentrotidae</taxon>
        <taxon>Strongylocentrotus</taxon>
    </lineage>
</organism>
<keyword id="KW-0025">Alternative splicing</keyword>
<keyword id="KW-0963">Cytoplasm</keyword>
<keyword id="KW-0238">DNA-binding</keyword>
<keyword id="KW-0479">Metal-binding</keyword>
<keyword id="KW-0539">Nucleus</keyword>
<keyword id="KW-0675">Receptor</keyword>
<keyword id="KW-1185">Reference proteome</keyword>
<keyword id="KW-0804">Transcription</keyword>
<keyword id="KW-0805">Transcription regulation</keyword>
<keyword id="KW-0862">Zinc</keyword>
<keyword id="KW-0863">Zinc-finger</keyword>
<proteinExistence type="evidence at protein level"/>
<comment type="function">
    <text evidence="4 5 6">Orphan nuclear receptor. Binds to the hormone response element in the upstream promoter region of the CYIIIB gene in vitro. Both isoform 1 and isoform 2 bind DNA.</text>
</comment>
<comment type="subunit">
    <text evidence="4">Binds DNA as a monomer.</text>
</comment>
<comment type="subcellular location">
    <subcellularLocation>
        <location>Cytoplasm</location>
    </subcellularLocation>
    <subcellularLocation>
        <location>Nucleus</location>
    </subcellularLocation>
    <text>The subcellular location of isoform 1 alters throughout development. In the unfertilized egg, isoform 1 expression is cytoplasmic and concentrated around the pronucleus. Following fertilization, the cytoplasmic protein rapidly enters the embryonic nuclei where it appears as speckles. From the fourth cleavage stage onwards it resides as speckles in the cytoplasm and the nucleus. The cytoplasmic localization also differs between cells, maintaining an apical position in polarized ectodermal and endodermal cells, whereas in non-polarized cells the cytoplasmic distribution is uniform. In contrast, isoform 2 resides in the nucleus in both 4-cell and 16-cell embryos.</text>
</comment>
<comment type="alternative products">
    <event type="alternative splicing"/>
    <isoform>
        <id>Q26622-1</id>
        <name evidence="5">1</name>
        <sequence type="displayed"/>
    </isoform>
    <isoform>
        <id>Q26622-2</id>
        <name evidence="5">2</name>
        <sequence type="described" ref="VSP_051753"/>
    </isoform>
</comment>
<comment type="tissue specificity">
    <text evidence="6">Expressed uniformly in the early embryo. In contrast, larval expression is localized to the epaulettes and mouth epithelium. Expressed in multiple adult organs including lantern muscle, tubefeet, intestine, coelomocytes and gonads. In the adult ovaries and testes, expression is specifically localized to the smooth muscle epithelial layer of cells which surround the ovarioles and acini, respectively (at protein level).</text>
</comment>
<comment type="developmental stage">
    <text evidence="5 6">Expressed both maternally and zygotically. Present in the unfertilized egg and in all embryonic stages up to the pluteus stage, followed by depletion of expression in the late embryo. Expression starts again just prior to metamorphosis in larva at 35 days post-fertilization (dpf). Also expressed in adults (at protein level).</text>
</comment>
<comment type="miscellaneous">
    <molecule>Isoform 2</molecule>
    <text evidence="7">May be due to exon skipping.</text>
</comment>
<comment type="similarity">
    <text evidence="1">Belongs to the nuclear hormone receptor family. NR2 subfamily.</text>
</comment>
<reference evidence="8 9" key="1">
    <citation type="journal article" date="1996" name="Dev. Biol.">
        <title>A novel sea urchin nuclear receptor encoded by alternatively spliced maternal RNAs.</title>
        <authorList>
            <person name="Kontrogianni-Konstantopoulos A."/>
            <person name="Vlahou A."/>
            <person name="Vu D."/>
            <person name="Flytzanis C.N."/>
        </authorList>
    </citation>
    <scope>NUCLEOTIDE SEQUENCE [MRNA] (ISOFORMS 1 AND 2)</scope>
    <scope>NUCLEOTIDE SEQUENCE [GENOMIC DNA] OF 16-153</scope>
    <scope>DNA-BINDING</scope>
    <scope>DEVELOPMENTAL STAGE</scope>
    <source>
        <tissue evidence="5">Embryo</tissue>
    </source>
</reference>
<reference evidence="8" key="2">
    <citation type="journal article" date="1998" name="J. Cell Sci.">
        <title>Embryonic and post-embryonic utilization and subcellular localization of the nuclear receptor SpSHR2 in the sea urchin.</title>
        <authorList>
            <person name="Kontrogianni-Konstantopoulos A."/>
            <person name="Leahy P.S."/>
            <person name="Flytzanis C.N."/>
        </authorList>
    </citation>
    <scope>DNA-BINDING</scope>
    <scope>SUBCELLULAR LOCATION</scope>
    <scope>TISSUE SPECIFICITY</scope>
    <scope>DEVELOPMENTAL STAGE</scope>
</reference>
<reference evidence="8" key="3">
    <citation type="journal article" date="2001" name="Mol. Reprod. Dev.">
        <title>Differential cellular compartmentalization of the nuclear receptor SpSHR2 splicing variants in early sea urchin embryos.</title>
        <authorList>
            <person name="Kontrogianni-Konstantopoulos A."/>
            <person name="Flytzanis C.N."/>
        </authorList>
    </citation>
    <scope>DNA-BINDING</scope>
    <scope>SUBUNIT</scope>
    <scope>SUBCELLULAR LOCATION</scope>
</reference>
<accession>Q26622</accession>
<accession>Q26624</accession>
<accession>Q26625</accession>
<accession>Q7JPB0</accession>
<dbReference type="EMBL" id="U38281">
    <property type="protein sequence ID" value="AAB19174.1"/>
    <property type="molecule type" value="mRNA"/>
</dbReference>
<dbReference type="EMBL" id="U38528">
    <property type="protein sequence ID" value="AAB19175.1"/>
    <property type="molecule type" value="mRNA"/>
</dbReference>
<dbReference type="EMBL" id="U38529">
    <property type="protein sequence ID" value="AAB19176.1"/>
    <property type="molecule type" value="Genomic_DNA"/>
</dbReference>
<dbReference type="RefSeq" id="NP_001116968.1">
    <molecule id="Q26622-1"/>
    <property type="nucleotide sequence ID" value="NM_001123496.1"/>
</dbReference>
<dbReference type="FunCoup" id="Q26622">
    <property type="interactions" value="1619"/>
</dbReference>
<dbReference type="STRING" id="7668.Q26622"/>
<dbReference type="EnsemblMetazoa" id="NM_001123496">
    <molecule id="Q26622-1"/>
    <property type="protein sequence ID" value="NP_001116968"/>
    <property type="gene ID" value="GeneID_373398"/>
</dbReference>
<dbReference type="GeneID" id="373398"/>
<dbReference type="KEGG" id="spu:373398"/>
<dbReference type="CTD" id="373398"/>
<dbReference type="eggNOG" id="KOG3575">
    <property type="taxonomic scope" value="Eukaryota"/>
</dbReference>
<dbReference type="HOGENOM" id="CLU_007368_16_2_1"/>
<dbReference type="InParanoid" id="Q26622"/>
<dbReference type="OMA" id="IHWARSI"/>
<dbReference type="OrthoDB" id="10024684at2759"/>
<dbReference type="Proteomes" id="UP000007110">
    <property type="component" value="Unassembled WGS sequence"/>
</dbReference>
<dbReference type="GO" id="GO:0045177">
    <property type="term" value="C:apical part of cell"/>
    <property type="evidence" value="ECO:0000314"/>
    <property type="project" value="UniProtKB"/>
</dbReference>
<dbReference type="GO" id="GO:0005737">
    <property type="term" value="C:cytoplasm"/>
    <property type="evidence" value="ECO:0000314"/>
    <property type="project" value="UniProtKB"/>
</dbReference>
<dbReference type="GO" id="GO:0005652">
    <property type="term" value="C:nuclear lamina"/>
    <property type="evidence" value="ECO:0000314"/>
    <property type="project" value="UniProtKB"/>
</dbReference>
<dbReference type="GO" id="GO:0005634">
    <property type="term" value="C:nucleus"/>
    <property type="evidence" value="ECO:0000314"/>
    <property type="project" value="UniProtKB"/>
</dbReference>
<dbReference type="GO" id="GO:0048471">
    <property type="term" value="C:perinuclear region of cytoplasm"/>
    <property type="evidence" value="ECO:0000314"/>
    <property type="project" value="UniProtKB"/>
</dbReference>
<dbReference type="GO" id="GO:0003677">
    <property type="term" value="F:DNA binding"/>
    <property type="evidence" value="ECO:0000314"/>
    <property type="project" value="UniProtKB"/>
</dbReference>
<dbReference type="GO" id="GO:0004879">
    <property type="term" value="F:nuclear receptor activity"/>
    <property type="evidence" value="ECO:0000318"/>
    <property type="project" value="GO_Central"/>
</dbReference>
<dbReference type="GO" id="GO:0000978">
    <property type="term" value="F:RNA polymerase II cis-regulatory region sequence-specific DNA binding"/>
    <property type="evidence" value="ECO:0000318"/>
    <property type="project" value="GO_Central"/>
</dbReference>
<dbReference type="GO" id="GO:0008270">
    <property type="term" value="F:zinc ion binding"/>
    <property type="evidence" value="ECO:0007669"/>
    <property type="project" value="UniProtKB-KW"/>
</dbReference>
<dbReference type="GO" id="GO:0030154">
    <property type="term" value="P:cell differentiation"/>
    <property type="evidence" value="ECO:0000318"/>
    <property type="project" value="GO_Central"/>
</dbReference>
<dbReference type="GO" id="GO:0006357">
    <property type="term" value="P:regulation of transcription by RNA polymerase II"/>
    <property type="evidence" value="ECO:0000318"/>
    <property type="project" value="GO_Central"/>
</dbReference>
<dbReference type="CDD" id="cd06967">
    <property type="entry name" value="NR_DBD_TR2_like"/>
    <property type="match status" value="1"/>
</dbReference>
<dbReference type="CDD" id="cd06952">
    <property type="entry name" value="NR_LBD_TR2_like"/>
    <property type="match status" value="1"/>
</dbReference>
<dbReference type="FunFam" id="1.10.565.10:FF:000012">
    <property type="entry name" value="Nuclear receptor subfamily 2 group C member 1"/>
    <property type="match status" value="1"/>
</dbReference>
<dbReference type="FunFam" id="3.30.50.10:FF:000015">
    <property type="entry name" value="Nuclear receptor subfamily 2, group C, member 1"/>
    <property type="match status" value="1"/>
</dbReference>
<dbReference type="Gene3D" id="3.30.50.10">
    <property type="entry name" value="Erythroid Transcription Factor GATA-1, subunit A"/>
    <property type="match status" value="1"/>
</dbReference>
<dbReference type="Gene3D" id="1.10.565.10">
    <property type="entry name" value="Retinoid X Receptor"/>
    <property type="match status" value="1"/>
</dbReference>
<dbReference type="InterPro" id="IPR035500">
    <property type="entry name" value="NHR-like_dom_sf"/>
</dbReference>
<dbReference type="InterPro" id="IPR048245">
    <property type="entry name" value="NR2C1/2-like_DBD"/>
</dbReference>
<dbReference type="InterPro" id="IPR048246">
    <property type="entry name" value="NR2C1/2-like_LBD"/>
</dbReference>
<dbReference type="InterPro" id="IPR000536">
    <property type="entry name" value="Nucl_hrmn_rcpt_lig-bd"/>
</dbReference>
<dbReference type="InterPro" id="IPR050274">
    <property type="entry name" value="Nuclear_hormone_rcpt_NR2"/>
</dbReference>
<dbReference type="InterPro" id="IPR001723">
    <property type="entry name" value="Nuclear_hrmn_rcpt"/>
</dbReference>
<dbReference type="InterPro" id="IPR001628">
    <property type="entry name" value="Znf_hrmn_rcpt"/>
</dbReference>
<dbReference type="InterPro" id="IPR013088">
    <property type="entry name" value="Znf_NHR/GATA"/>
</dbReference>
<dbReference type="PANTHER" id="PTHR24083">
    <property type="entry name" value="NUCLEAR HORMONE RECEPTOR"/>
    <property type="match status" value="1"/>
</dbReference>
<dbReference type="Pfam" id="PF00104">
    <property type="entry name" value="Hormone_recep"/>
    <property type="match status" value="1"/>
</dbReference>
<dbReference type="Pfam" id="PF00105">
    <property type="entry name" value="zf-C4"/>
    <property type="match status" value="1"/>
</dbReference>
<dbReference type="PRINTS" id="PR01282">
    <property type="entry name" value="COUPTNFACTOR"/>
</dbReference>
<dbReference type="PRINTS" id="PR00398">
    <property type="entry name" value="STRDHORMONER"/>
</dbReference>
<dbReference type="PRINTS" id="PR00047">
    <property type="entry name" value="STROIDFINGER"/>
</dbReference>
<dbReference type="SMART" id="SM00430">
    <property type="entry name" value="HOLI"/>
    <property type="match status" value="1"/>
</dbReference>
<dbReference type="SMART" id="SM00399">
    <property type="entry name" value="ZnF_C4"/>
    <property type="match status" value="1"/>
</dbReference>
<dbReference type="SUPFAM" id="SSF57716">
    <property type="entry name" value="Glucocorticoid receptor-like (DNA-binding domain)"/>
    <property type="match status" value="1"/>
</dbReference>
<dbReference type="SUPFAM" id="SSF48508">
    <property type="entry name" value="Nuclear receptor ligand-binding domain"/>
    <property type="match status" value="1"/>
</dbReference>
<dbReference type="PROSITE" id="PS51843">
    <property type="entry name" value="NR_LBD"/>
    <property type="match status" value="1"/>
</dbReference>
<dbReference type="PROSITE" id="PS00031">
    <property type="entry name" value="NUCLEAR_REC_DBD_1"/>
    <property type="match status" value="1"/>
</dbReference>
<dbReference type="PROSITE" id="PS51030">
    <property type="entry name" value="NUCLEAR_REC_DBD_2"/>
    <property type="match status" value="1"/>
</dbReference>
<feature type="chain" id="PRO_0000053754" description="Orphan steroid hormone receptor 2">
    <location>
        <begin position="1"/>
        <end position="583"/>
    </location>
</feature>
<feature type="domain" description="NR LBD" evidence="3">
    <location>
        <begin position="248"/>
        <end position="563"/>
    </location>
</feature>
<feature type="DNA-binding region" description="Nuclear receptor" evidence="2">
    <location>
        <begin position="84"/>
        <end position="159"/>
    </location>
</feature>
<feature type="zinc finger region" description="NR C4-type" evidence="2">
    <location>
        <begin position="87"/>
        <end position="107"/>
    </location>
</feature>
<feature type="zinc finger region" description="NR C4-type" evidence="2">
    <location>
        <begin position="123"/>
        <end position="142"/>
    </location>
</feature>
<feature type="splice variant" id="VSP_051753" description="In isoform 2." evidence="7">
    <location>
        <begin position="176"/>
        <end position="535"/>
    </location>
</feature>
<gene>
    <name evidence="7" type="primary">SHR2</name>
</gene>